<accession>Q8RY67</accession>
<accession>O80461</accession>
<gene>
    <name type="primary">WAKL14</name>
    <name type="ordered locus">At2g23450</name>
    <name type="ORF">F26B6.10</name>
</gene>
<keyword id="KW-0067">ATP-binding</keyword>
<keyword id="KW-0325">Glycoprotein</keyword>
<keyword id="KW-0418">Kinase</keyword>
<keyword id="KW-0472">Membrane</keyword>
<keyword id="KW-0547">Nucleotide-binding</keyword>
<keyword id="KW-1185">Reference proteome</keyword>
<keyword id="KW-0723">Serine/threonine-protein kinase</keyword>
<keyword id="KW-0732">Signal</keyword>
<keyword id="KW-0808">Transferase</keyword>
<keyword id="KW-0812">Transmembrane</keyword>
<keyword id="KW-1133">Transmembrane helix</keyword>
<reference key="1">
    <citation type="journal article" date="1999" name="Nature">
        <title>Sequence and analysis of chromosome 2 of the plant Arabidopsis thaliana.</title>
        <authorList>
            <person name="Lin X."/>
            <person name="Kaul S."/>
            <person name="Rounsley S.D."/>
            <person name="Shea T.P."/>
            <person name="Benito M.-I."/>
            <person name="Town C.D."/>
            <person name="Fujii C.Y."/>
            <person name="Mason T.M."/>
            <person name="Bowman C.L."/>
            <person name="Barnstead M.E."/>
            <person name="Feldblyum T.V."/>
            <person name="Buell C.R."/>
            <person name="Ketchum K.A."/>
            <person name="Lee J.J."/>
            <person name="Ronning C.M."/>
            <person name="Koo H.L."/>
            <person name="Moffat K.S."/>
            <person name="Cronin L.A."/>
            <person name="Shen M."/>
            <person name="Pai G."/>
            <person name="Van Aken S."/>
            <person name="Umayam L."/>
            <person name="Tallon L.J."/>
            <person name="Gill J.E."/>
            <person name="Adams M.D."/>
            <person name="Carrera A.J."/>
            <person name="Creasy T.H."/>
            <person name="Goodman H.M."/>
            <person name="Somerville C.R."/>
            <person name="Copenhaver G.P."/>
            <person name="Preuss D."/>
            <person name="Nierman W.C."/>
            <person name="White O."/>
            <person name="Eisen J.A."/>
            <person name="Salzberg S.L."/>
            <person name="Fraser C.M."/>
            <person name="Venter J.C."/>
        </authorList>
    </citation>
    <scope>NUCLEOTIDE SEQUENCE [LARGE SCALE GENOMIC DNA]</scope>
    <source>
        <strain>cv. Columbia</strain>
    </source>
</reference>
<reference key="2">
    <citation type="journal article" date="2017" name="Plant J.">
        <title>Araport11: a complete reannotation of the Arabidopsis thaliana reference genome.</title>
        <authorList>
            <person name="Cheng C.Y."/>
            <person name="Krishnakumar V."/>
            <person name="Chan A.P."/>
            <person name="Thibaud-Nissen F."/>
            <person name="Schobel S."/>
            <person name="Town C.D."/>
        </authorList>
    </citation>
    <scope>GENOME REANNOTATION</scope>
    <source>
        <strain>cv. Columbia</strain>
    </source>
</reference>
<reference key="3">
    <citation type="journal article" date="2003" name="Science">
        <title>Empirical analysis of transcriptional activity in the Arabidopsis genome.</title>
        <authorList>
            <person name="Yamada K."/>
            <person name="Lim J."/>
            <person name="Dale J.M."/>
            <person name="Chen H."/>
            <person name="Shinn P."/>
            <person name="Palm C.J."/>
            <person name="Southwick A.M."/>
            <person name="Wu H.C."/>
            <person name="Kim C.J."/>
            <person name="Nguyen M."/>
            <person name="Pham P.K."/>
            <person name="Cheuk R.F."/>
            <person name="Karlin-Newmann G."/>
            <person name="Liu S.X."/>
            <person name="Lam B."/>
            <person name="Sakano H."/>
            <person name="Wu T."/>
            <person name="Yu G."/>
            <person name="Miranda M."/>
            <person name="Quach H.L."/>
            <person name="Tripp M."/>
            <person name="Chang C.H."/>
            <person name="Lee J.M."/>
            <person name="Toriumi M.J."/>
            <person name="Chan M.M."/>
            <person name="Tang C.C."/>
            <person name="Onodera C.S."/>
            <person name="Deng J.M."/>
            <person name="Akiyama K."/>
            <person name="Ansari Y."/>
            <person name="Arakawa T."/>
            <person name="Banh J."/>
            <person name="Banno F."/>
            <person name="Bowser L."/>
            <person name="Brooks S.Y."/>
            <person name="Carninci P."/>
            <person name="Chao Q."/>
            <person name="Choy N."/>
            <person name="Enju A."/>
            <person name="Goldsmith A.D."/>
            <person name="Gurjal M."/>
            <person name="Hansen N.F."/>
            <person name="Hayashizaki Y."/>
            <person name="Johnson-Hopson C."/>
            <person name="Hsuan V.W."/>
            <person name="Iida K."/>
            <person name="Karnes M."/>
            <person name="Khan S."/>
            <person name="Koesema E."/>
            <person name="Ishida J."/>
            <person name="Jiang P.X."/>
            <person name="Jones T."/>
            <person name="Kawai J."/>
            <person name="Kamiya A."/>
            <person name="Meyers C."/>
            <person name="Nakajima M."/>
            <person name="Narusaka M."/>
            <person name="Seki M."/>
            <person name="Sakurai T."/>
            <person name="Satou M."/>
            <person name="Tamse R."/>
            <person name="Vaysberg M."/>
            <person name="Wallender E.K."/>
            <person name="Wong C."/>
            <person name="Yamamura Y."/>
            <person name="Yuan S."/>
            <person name="Shinozaki K."/>
            <person name="Davis R.W."/>
            <person name="Theologis A."/>
            <person name="Ecker J.R."/>
        </authorList>
    </citation>
    <scope>NUCLEOTIDE SEQUENCE [LARGE SCALE MRNA]</scope>
    <source>
        <strain>cv. Columbia</strain>
    </source>
</reference>
<reference key="4">
    <citation type="journal article" date="2002" name="Plant Physiol.">
        <title>The cell wall-associated kinase (WAK) and WAK-like kinase gene family.</title>
        <authorList>
            <person name="Verica J.A."/>
            <person name="He Z.-H."/>
        </authorList>
    </citation>
    <scope>GENE FAMILY ORGANIZATION</scope>
</reference>
<dbReference type="EC" id="2.7.11.-"/>
<dbReference type="EMBL" id="AC003040">
    <property type="protein sequence ID" value="AAC23760.2"/>
    <property type="molecule type" value="Genomic_DNA"/>
</dbReference>
<dbReference type="EMBL" id="CP002685">
    <property type="protein sequence ID" value="AEC07456.1"/>
    <property type="molecule type" value="Genomic_DNA"/>
</dbReference>
<dbReference type="EMBL" id="CP002685">
    <property type="protein sequence ID" value="AEC07457.1"/>
    <property type="molecule type" value="Genomic_DNA"/>
</dbReference>
<dbReference type="EMBL" id="AY075606">
    <property type="protein sequence ID" value="AAL91622.1"/>
    <property type="molecule type" value="mRNA"/>
</dbReference>
<dbReference type="EMBL" id="BT000817">
    <property type="protein sequence ID" value="AAN33192.1"/>
    <property type="molecule type" value="mRNA"/>
</dbReference>
<dbReference type="PIR" id="T01134">
    <property type="entry name" value="T01134"/>
</dbReference>
<dbReference type="RefSeq" id="NP_565552.1">
    <property type="nucleotide sequence ID" value="NM_127909.2"/>
</dbReference>
<dbReference type="RefSeq" id="NP_850041.1">
    <property type="nucleotide sequence ID" value="NM_179710.3"/>
</dbReference>
<dbReference type="SMR" id="Q8RY67"/>
<dbReference type="BioGRID" id="2229">
    <property type="interactions" value="8"/>
</dbReference>
<dbReference type="FunCoup" id="Q8RY67">
    <property type="interactions" value="1270"/>
</dbReference>
<dbReference type="IntAct" id="Q8RY67">
    <property type="interactions" value="7"/>
</dbReference>
<dbReference type="STRING" id="3702.Q8RY67"/>
<dbReference type="GlyCosmos" id="Q8RY67">
    <property type="glycosylation" value="7 sites, No reported glycans"/>
</dbReference>
<dbReference type="GlyGen" id="Q8RY67">
    <property type="glycosylation" value="8 sites"/>
</dbReference>
<dbReference type="PaxDb" id="3702-AT2G23450.2"/>
<dbReference type="ProteomicsDB" id="242744"/>
<dbReference type="EnsemblPlants" id="AT2G23450.1">
    <property type="protein sequence ID" value="AT2G23450.1"/>
    <property type="gene ID" value="AT2G23450"/>
</dbReference>
<dbReference type="EnsemblPlants" id="AT2G23450.2">
    <property type="protein sequence ID" value="AT2G23450.2"/>
    <property type="gene ID" value="AT2G23450"/>
</dbReference>
<dbReference type="GeneID" id="816877"/>
<dbReference type="Gramene" id="AT2G23450.1">
    <property type="protein sequence ID" value="AT2G23450.1"/>
    <property type="gene ID" value="AT2G23450"/>
</dbReference>
<dbReference type="Gramene" id="AT2G23450.2">
    <property type="protein sequence ID" value="AT2G23450.2"/>
    <property type="gene ID" value="AT2G23450"/>
</dbReference>
<dbReference type="KEGG" id="ath:AT2G23450"/>
<dbReference type="Araport" id="AT2G23450"/>
<dbReference type="TAIR" id="AT2G23450"/>
<dbReference type="eggNOG" id="KOG1187">
    <property type="taxonomic scope" value="Eukaryota"/>
</dbReference>
<dbReference type="HOGENOM" id="CLU_000288_43_5_1"/>
<dbReference type="InParanoid" id="Q8RY67"/>
<dbReference type="OMA" id="SCYSEAR"/>
<dbReference type="PhylomeDB" id="Q8RY67"/>
<dbReference type="PRO" id="PR:Q8RY67"/>
<dbReference type="Proteomes" id="UP000006548">
    <property type="component" value="Chromosome 2"/>
</dbReference>
<dbReference type="ExpressionAtlas" id="Q8RY67">
    <property type="expression patterns" value="baseline and differential"/>
</dbReference>
<dbReference type="GO" id="GO:0016020">
    <property type="term" value="C:membrane"/>
    <property type="evidence" value="ECO:0007669"/>
    <property type="project" value="UniProtKB-SubCell"/>
</dbReference>
<dbReference type="GO" id="GO:0005524">
    <property type="term" value="F:ATP binding"/>
    <property type="evidence" value="ECO:0007669"/>
    <property type="project" value="UniProtKB-KW"/>
</dbReference>
<dbReference type="GO" id="GO:0106310">
    <property type="term" value="F:protein serine kinase activity"/>
    <property type="evidence" value="ECO:0007669"/>
    <property type="project" value="RHEA"/>
</dbReference>
<dbReference type="GO" id="GO:0004674">
    <property type="term" value="F:protein serine/threonine kinase activity"/>
    <property type="evidence" value="ECO:0007669"/>
    <property type="project" value="UniProtKB-KW"/>
</dbReference>
<dbReference type="CDD" id="cd14066">
    <property type="entry name" value="STKc_IRAK"/>
    <property type="match status" value="1"/>
</dbReference>
<dbReference type="FunFam" id="3.30.200.20:FF:000481">
    <property type="entry name" value="Wall-associated receptor kinase-like 14"/>
    <property type="match status" value="1"/>
</dbReference>
<dbReference type="FunFam" id="1.10.510.10:FF:000161">
    <property type="entry name" value="Wall-associated receptor kinase-like 20"/>
    <property type="match status" value="1"/>
</dbReference>
<dbReference type="Gene3D" id="3.30.200.20">
    <property type="entry name" value="Phosphorylase Kinase, domain 1"/>
    <property type="match status" value="1"/>
</dbReference>
<dbReference type="Gene3D" id="1.10.510.10">
    <property type="entry name" value="Transferase(Phosphotransferase) domain 1"/>
    <property type="match status" value="1"/>
</dbReference>
<dbReference type="InterPro" id="IPR011009">
    <property type="entry name" value="Kinase-like_dom_sf"/>
</dbReference>
<dbReference type="InterPro" id="IPR000719">
    <property type="entry name" value="Prot_kinase_dom"/>
</dbReference>
<dbReference type="InterPro" id="IPR017441">
    <property type="entry name" value="Protein_kinase_ATP_BS"/>
</dbReference>
<dbReference type="InterPro" id="IPR008271">
    <property type="entry name" value="Ser/Thr_kinase_AS"/>
</dbReference>
<dbReference type="PANTHER" id="PTHR46008">
    <property type="entry name" value="LEAF RUST 10 DISEASE-RESISTANCE LOCUS RECEPTOR-LIKE PROTEIN KINASE-LIKE 1.4"/>
    <property type="match status" value="1"/>
</dbReference>
<dbReference type="PANTHER" id="PTHR46008:SF62">
    <property type="entry name" value="PROTEIN KINASE DOMAIN-CONTAINING PROTEIN"/>
    <property type="match status" value="1"/>
</dbReference>
<dbReference type="Pfam" id="PF00069">
    <property type="entry name" value="Pkinase"/>
    <property type="match status" value="1"/>
</dbReference>
<dbReference type="SMART" id="SM00220">
    <property type="entry name" value="S_TKc"/>
    <property type="match status" value="1"/>
</dbReference>
<dbReference type="SUPFAM" id="SSF56112">
    <property type="entry name" value="Protein kinase-like (PK-like)"/>
    <property type="match status" value="1"/>
</dbReference>
<dbReference type="PROSITE" id="PS01186">
    <property type="entry name" value="EGF_2"/>
    <property type="match status" value="1"/>
</dbReference>
<dbReference type="PROSITE" id="PS00107">
    <property type="entry name" value="PROTEIN_KINASE_ATP"/>
    <property type="match status" value="1"/>
</dbReference>
<dbReference type="PROSITE" id="PS50011">
    <property type="entry name" value="PROTEIN_KINASE_DOM"/>
    <property type="match status" value="1"/>
</dbReference>
<dbReference type="PROSITE" id="PS00108">
    <property type="entry name" value="PROTEIN_KINASE_ST"/>
    <property type="match status" value="1"/>
</dbReference>
<comment type="function">
    <text>Serine/threonine-protein kinase that may function as a signaling receptor of extracellular matrix component.</text>
</comment>
<comment type="catalytic activity">
    <reaction>
        <text>L-seryl-[protein] + ATP = O-phospho-L-seryl-[protein] + ADP + H(+)</text>
        <dbReference type="Rhea" id="RHEA:17989"/>
        <dbReference type="Rhea" id="RHEA-COMP:9863"/>
        <dbReference type="Rhea" id="RHEA-COMP:11604"/>
        <dbReference type="ChEBI" id="CHEBI:15378"/>
        <dbReference type="ChEBI" id="CHEBI:29999"/>
        <dbReference type="ChEBI" id="CHEBI:30616"/>
        <dbReference type="ChEBI" id="CHEBI:83421"/>
        <dbReference type="ChEBI" id="CHEBI:456216"/>
    </reaction>
</comment>
<comment type="catalytic activity">
    <reaction>
        <text>L-threonyl-[protein] + ATP = O-phospho-L-threonyl-[protein] + ADP + H(+)</text>
        <dbReference type="Rhea" id="RHEA:46608"/>
        <dbReference type="Rhea" id="RHEA-COMP:11060"/>
        <dbReference type="Rhea" id="RHEA-COMP:11605"/>
        <dbReference type="ChEBI" id="CHEBI:15378"/>
        <dbReference type="ChEBI" id="CHEBI:30013"/>
        <dbReference type="ChEBI" id="CHEBI:30616"/>
        <dbReference type="ChEBI" id="CHEBI:61977"/>
        <dbReference type="ChEBI" id="CHEBI:456216"/>
    </reaction>
</comment>
<comment type="subcellular location">
    <subcellularLocation>
        <location evidence="5">Membrane</location>
        <topology evidence="5">Single-pass type I membrane protein</topology>
    </subcellularLocation>
</comment>
<comment type="similarity">
    <text evidence="2">Belongs to the protein kinase superfamily. Ser/Thr protein kinase family.</text>
</comment>
<comment type="caution">
    <text evidence="5">Lacks the calcium-binding EGF-like domain which is a conserved feature of the wall-associated receptor kinase family.</text>
</comment>
<feature type="signal peptide" evidence="1">
    <location>
        <begin position="1"/>
        <end position="42"/>
    </location>
</feature>
<feature type="chain" id="PRO_0000253319" description="Wall-associated receptor kinase-like 14">
    <location>
        <begin position="43"/>
        <end position="708"/>
    </location>
</feature>
<feature type="topological domain" description="Extracellular" evidence="1">
    <location>
        <begin position="43"/>
        <end position="285"/>
    </location>
</feature>
<feature type="transmembrane region" description="Helical" evidence="1">
    <location>
        <begin position="286"/>
        <end position="306"/>
    </location>
</feature>
<feature type="topological domain" description="Cytoplasmic" evidence="1">
    <location>
        <begin position="307"/>
        <end position="708"/>
    </location>
</feature>
<feature type="domain" description="Protein kinase" evidence="2">
    <location>
        <begin position="348"/>
        <end position="629"/>
    </location>
</feature>
<feature type="region of interest" description="Disordered" evidence="4">
    <location>
        <begin position="636"/>
        <end position="659"/>
    </location>
</feature>
<feature type="region of interest" description="Disordered" evidence="4">
    <location>
        <begin position="686"/>
        <end position="708"/>
    </location>
</feature>
<feature type="compositionally biased region" description="Basic and acidic residues" evidence="4">
    <location>
        <begin position="643"/>
        <end position="652"/>
    </location>
</feature>
<feature type="compositionally biased region" description="Polar residues" evidence="4">
    <location>
        <begin position="692"/>
        <end position="708"/>
    </location>
</feature>
<feature type="active site" description="Proton acceptor" evidence="2 3">
    <location>
        <position position="472"/>
    </location>
</feature>
<feature type="binding site" evidence="2">
    <location>
        <begin position="354"/>
        <end position="362"/>
    </location>
    <ligand>
        <name>ATP</name>
        <dbReference type="ChEBI" id="CHEBI:30616"/>
    </ligand>
</feature>
<feature type="binding site" evidence="2">
    <location>
        <position position="376"/>
    </location>
    <ligand>
        <name>ATP</name>
        <dbReference type="ChEBI" id="CHEBI:30616"/>
    </ligand>
</feature>
<feature type="glycosylation site" description="N-linked (GlcNAc...) asparagine" evidence="1">
    <location>
        <position position="43"/>
    </location>
</feature>
<feature type="glycosylation site" description="N-linked (GlcNAc...) asparagine" evidence="1">
    <location>
        <position position="88"/>
    </location>
</feature>
<feature type="glycosylation site" description="N-linked (GlcNAc...) asparagine" evidence="1">
    <location>
        <position position="101"/>
    </location>
</feature>
<feature type="glycosylation site" description="N-linked (GlcNAc...) asparagine" evidence="1">
    <location>
        <position position="131"/>
    </location>
</feature>
<feature type="glycosylation site" description="N-linked (GlcNAc...) asparagine" evidence="1">
    <location>
        <position position="158"/>
    </location>
</feature>
<feature type="glycosylation site" description="N-linked (GlcNAc...) asparagine" evidence="1">
    <location>
        <position position="167"/>
    </location>
</feature>
<feature type="glycosylation site" description="N-linked (GlcNAc...) asparagine" evidence="1">
    <location>
        <position position="184"/>
    </location>
</feature>
<feature type="sequence conflict" description="In Ref. 3; AAL91622/AAN33192." evidence="5" ref="3">
    <original>V</original>
    <variation>A</variation>
    <location>
        <position position="89"/>
    </location>
</feature>
<proteinExistence type="evidence at transcript level"/>
<evidence type="ECO:0000255" key="1"/>
<evidence type="ECO:0000255" key="2">
    <source>
        <dbReference type="PROSITE-ProRule" id="PRU00159"/>
    </source>
</evidence>
<evidence type="ECO:0000255" key="3">
    <source>
        <dbReference type="PROSITE-ProRule" id="PRU10027"/>
    </source>
</evidence>
<evidence type="ECO:0000256" key="4">
    <source>
        <dbReference type="SAM" id="MobiDB-lite"/>
    </source>
</evidence>
<evidence type="ECO:0000305" key="5"/>
<organism>
    <name type="scientific">Arabidopsis thaliana</name>
    <name type="common">Mouse-ear cress</name>
    <dbReference type="NCBI Taxonomy" id="3702"/>
    <lineage>
        <taxon>Eukaryota</taxon>
        <taxon>Viridiplantae</taxon>
        <taxon>Streptophyta</taxon>
        <taxon>Embryophyta</taxon>
        <taxon>Tracheophyta</taxon>
        <taxon>Spermatophyta</taxon>
        <taxon>Magnoliopsida</taxon>
        <taxon>eudicotyledons</taxon>
        <taxon>Gunneridae</taxon>
        <taxon>Pentapetalae</taxon>
        <taxon>rosids</taxon>
        <taxon>malvids</taxon>
        <taxon>Brassicales</taxon>
        <taxon>Brassicaceae</taxon>
        <taxon>Camelineae</taxon>
        <taxon>Arabidopsis</taxon>
    </lineage>
</organism>
<protein>
    <recommendedName>
        <fullName>Wall-associated receptor kinase-like 14</fullName>
        <ecNumber>2.7.11.-</ecNumber>
    </recommendedName>
</protein>
<sequence length="708" mass="77873">MLRSIFDFNQRSTKMVMISHKLDLILVFIIVIGGSIFRRVSANFTVPCNGRCGGLTLPYPFGFSNGCSIRFDCSAAEKPMIGDFSVQNVTENSIFVGLSHNCTRKIEDMNPLFGENFAPTSENSFLMENCNRTTDGCSIKQKFLENVLKLKSCDATGNISCFSLDSNSSSKNSAKFFSMKTLRNSSCSLLFSSIAFESVGVNAGIALEFERVRLGWWLKGGCESGTCAANTDCTDVETPHGYAGHRCSCLDGFHGDGYTNPCQRALPECRGSKLVWRHCRSNLITIVGGTVGGAFLLAALAFFFFCKRRRSTPLRSHLSAKRLLSEAAGNSSVAFFPYKEIEKATDGFSEKQKLGIGAYGTVYRGKLQNDEWVAIKRLRHRDSESLDQVMNEIKLLSSVSHPNLVRLLGCCIEQGDPVLVYEYMPNGTLSEHLQRDRGSGLPWTLRLTVATQTAKAIAYLHSSMNPPIYHRDIKSTNILLDYDFNSKVADFGLSRLGMTESSHISTAPQGTPGYLDPQYHQCFHLSDKSDVYSFGVVLAEIITGLKVVDFTRPHTEINLAALAVDKIGSGCIDEIIDPILDLDLDAWTLSSIHTVAELAFRCLAFHSDMRPTMTEVADELEQIRLSGWIPSMSLDSPAGSLRSSDRGSERSVKQSSIGSRRVVIPQKQPDCLASVEEISDSSPISVQDPWLSAQSSPSTNTLLGNIPR</sequence>
<name>WAKLO_ARATH</name>